<evidence type="ECO:0000255" key="1">
    <source>
        <dbReference type="PROSITE-ProRule" id="PRU00059"/>
    </source>
</evidence>
<evidence type="ECO:0000269" key="2">
    <source>
    </source>
</evidence>
<evidence type="ECO:0000269" key="3">
    <source>
    </source>
</evidence>
<evidence type="ECO:0000269" key="4">
    <source>
    </source>
</evidence>
<evidence type="ECO:0000305" key="5"/>
<evidence type="ECO:0007829" key="6">
    <source>
        <dbReference type="PDB" id="1SPP"/>
    </source>
</evidence>
<reference key="1">
    <citation type="journal article" date="1993" name="DNA Cell Biol.">
        <title>Molecular cloning and sequence analysis of two porcine seminal proteins, PSP-I and PSP-II: new members of the spermadhesin family.</title>
        <authorList>
            <person name="Kwok S.C.M."/>
            <person name="Yang D."/>
            <person name="Dai G."/>
            <person name="Soares M.J."/>
            <person name="Chen S."/>
            <person name="McMurtry J.P."/>
        </authorList>
    </citation>
    <scope>NUCLEOTIDE SEQUENCE [MRNA]</scope>
    <source>
        <tissue>Seminal vesicle</tissue>
    </source>
</reference>
<reference key="2">
    <citation type="journal article" date="1993" name="Eur. J. Biochem.">
        <title>Characterization of two glycosylated boar spermadhesins.</title>
        <authorList>
            <person name="Calvete J.J."/>
            <person name="Solis D."/>
            <person name="Sanz L."/>
            <person name="Diaz-Maurino T."/>
            <person name="Schaefer W."/>
            <person name="Mann K."/>
            <person name="Toepfer-Petersen E."/>
        </authorList>
    </citation>
    <scope>PROTEIN SEQUENCE OF 25-133</scope>
    <source>
        <tissue>Sperm</tissue>
    </source>
</reference>
<reference key="3">
    <citation type="journal article" date="1992" name="Arch. Biochem. Biophys.">
        <title>Purification and characterization of PSP-I and PSP-II, two major proteins from porcine seminal plasma.</title>
        <authorList>
            <person name="Rutherfurd K.J."/>
            <person name="Swiderek K.M."/>
            <person name="Green C.B."/>
            <person name="Chen S."/>
            <person name="Shively J.E."/>
            <person name="Kwok S.C.M."/>
        </authorList>
    </citation>
    <scope>PROTEIN SEQUENCE OF 25-133</scope>
    <source>
        <tissue>Sperm</tissue>
    </source>
</reference>
<reference key="4">
    <citation type="journal article" date="1995" name="FEBS Lett.">
        <title>Boar spermadhesin PSP-II: location of posttranslational modifications, heterodimer formation with PSP-I glycoforms and effect of dimerization on the ligand-binding capabilities of the subunits.</title>
        <authorList>
            <person name="Calvete J.J."/>
            <person name="Mann K."/>
            <person name="Schaefer W."/>
            <person name="Raida M."/>
            <person name="Sanz L."/>
            <person name="Toepfer-Petersen E."/>
        </authorList>
    </citation>
    <scope>PARTIAL PROTEIN SEQUENCE</scope>
    <scope>DISULFIDE BONDS</scope>
    <scope>GLYCOSYLATION AT ASN-71</scope>
    <scope>MASS SPECTROMETRY</scope>
    <source>
        <tissue>Sperm</tissue>
    </source>
</reference>
<reference key="5">
    <citation type="journal article" date="1996" name="FEBS Lett.">
        <title>Mapping the heparin-binding domain of boar spermadhesins.</title>
        <authorList>
            <person name="Calvete J.J."/>
            <person name="Dostalova Z."/>
            <person name="Sanz L."/>
            <person name="Adermann K."/>
            <person name="Thole H.H."/>
            <person name="Toepfer-Petersen E."/>
        </authorList>
    </citation>
    <scope>PROTEIN SEQUENCE OF 28-34; 49-53; 71-78 AND 95-108</scope>
</reference>
<reference key="6">
    <citation type="journal article" date="1999" name="Eur. J. Biochem.">
        <title>Structural characterization of the oligosaccharide chains of native and crystallized boar seminal plasma spermadhesin PSP-I and PSP-II glycoforms.</title>
        <authorList>
            <person name="Nimtz M."/>
            <person name="Grabenhorst E."/>
            <person name="Conradt H.S."/>
            <person name="Sanz L."/>
            <person name="Calvete J.J."/>
        </authorList>
    </citation>
    <scope>STRUCTURE OF CARBOHYDRATE</scope>
</reference>
<reference key="7">
    <citation type="journal article" date="1997" name="Nat. Struct. Biol.">
        <title>The crystal structures of two spermadhesins reveal the CUB domain fold.</title>
        <authorList>
            <person name="Romero A."/>
            <person name="Romao M.J."/>
            <person name="Varela P.F."/>
            <person name="Koelln I."/>
            <person name="Dias J.M."/>
            <person name="Carvalho A.L."/>
            <person name="Sanz L."/>
            <person name="Toepfer-Petersen E."/>
            <person name="Calvete J.J."/>
        </authorList>
    </citation>
    <scope>X-RAY CRYSTALLOGRAPHY (2.4 ANGSTROMS)</scope>
</reference>
<dbReference type="EMBL" id="U02626">
    <property type="protein sequence ID" value="AAC48399.1"/>
    <property type="molecule type" value="mRNA"/>
</dbReference>
<dbReference type="RefSeq" id="NP_999002.1">
    <property type="nucleotide sequence ID" value="NM_213837.1"/>
</dbReference>
<dbReference type="PDB" id="1SPP">
    <property type="method" value="X-ray"/>
    <property type="resolution" value="2.40 A"/>
    <property type="chains" value="A=25-133"/>
</dbReference>
<dbReference type="PDBsum" id="1SPP"/>
<dbReference type="SMR" id="P35495"/>
<dbReference type="BioGRID" id="1148964">
    <property type="interactions" value="1"/>
</dbReference>
<dbReference type="MINT" id="P35495"/>
<dbReference type="STRING" id="9823.ENSSSCP00000063839"/>
<dbReference type="GlyConnect" id="360">
    <property type="glycosylation" value="36 N-Linked glycans (1 site)"/>
</dbReference>
<dbReference type="GlyGen" id="P35495">
    <property type="glycosylation" value="1 site, 67 N-linked glycans (1 site)"/>
</dbReference>
<dbReference type="PaxDb" id="9823-ENSSSCP00000003223"/>
<dbReference type="PeptideAtlas" id="P35495"/>
<dbReference type="Ensembl" id="ENSSSCT00045021213.1">
    <property type="protein sequence ID" value="ENSSSCP00045014595.1"/>
    <property type="gene ID" value="ENSSSCG00045012414.1"/>
</dbReference>
<dbReference type="Ensembl" id="ENSSSCT00090047988">
    <property type="protein sequence ID" value="ENSSSCP00090029773"/>
    <property type="gene ID" value="ENSSSCG00090027138"/>
</dbReference>
<dbReference type="Ensembl" id="ENSSSCT00105073025">
    <property type="protein sequence ID" value="ENSSSCP00105051881"/>
    <property type="gene ID" value="ENSSSCG00105038183"/>
</dbReference>
<dbReference type="GeneID" id="396818"/>
<dbReference type="KEGG" id="ssc:396818"/>
<dbReference type="CTD" id="396818"/>
<dbReference type="eggNOG" id="ENOG502TD48">
    <property type="taxonomic scope" value="Eukaryota"/>
</dbReference>
<dbReference type="InParanoid" id="P35495"/>
<dbReference type="OrthoDB" id="9517200at2759"/>
<dbReference type="EvolutionaryTrace" id="P35495"/>
<dbReference type="Proteomes" id="UP000008227">
    <property type="component" value="Unplaced"/>
</dbReference>
<dbReference type="Proteomes" id="UP000314985">
    <property type="component" value="Unplaced"/>
</dbReference>
<dbReference type="Proteomes" id="UP000694570">
    <property type="component" value="Unplaced"/>
</dbReference>
<dbReference type="Proteomes" id="UP000694571">
    <property type="component" value="Unplaced"/>
</dbReference>
<dbReference type="Proteomes" id="UP000694720">
    <property type="component" value="Unplaced"/>
</dbReference>
<dbReference type="Proteomes" id="UP000694722">
    <property type="component" value="Unplaced"/>
</dbReference>
<dbReference type="Proteomes" id="UP000694723">
    <property type="component" value="Unplaced"/>
</dbReference>
<dbReference type="Proteomes" id="UP000694724">
    <property type="component" value="Unplaced"/>
</dbReference>
<dbReference type="Proteomes" id="UP000694725">
    <property type="component" value="Unplaced"/>
</dbReference>
<dbReference type="Proteomes" id="UP000694726">
    <property type="component" value="Unplaced"/>
</dbReference>
<dbReference type="Proteomes" id="UP000694727">
    <property type="component" value="Unplaced"/>
</dbReference>
<dbReference type="Proteomes" id="UP000694728">
    <property type="component" value="Unplaced"/>
</dbReference>
<dbReference type="GO" id="GO:0005576">
    <property type="term" value="C:extracellular region"/>
    <property type="evidence" value="ECO:0007669"/>
    <property type="project" value="UniProtKB-SubCell"/>
</dbReference>
<dbReference type="GO" id="GO:0007338">
    <property type="term" value="P:single fertilization"/>
    <property type="evidence" value="ECO:0007669"/>
    <property type="project" value="InterPro"/>
</dbReference>
<dbReference type="CDD" id="cd00041">
    <property type="entry name" value="CUB"/>
    <property type="match status" value="1"/>
</dbReference>
<dbReference type="Gene3D" id="2.60.120.290">
    <property type="entry name" value="Spermadhesin, CUB domain"/>
    <property type="match status" value="1"/>
</dbReference>
<dbReference type="InterPro" id="IPR000859">
    <property type="entry name" value="CUB_dom"/>
</dbReference>
<dbReference type="InterPro" id="IPR035914">
    <property type="entry name" value="Sperma_CUB_dom_sf"/>
</dbReference>
<dbReference type="InterPro" id="IPR000124">
    <property type="entry name" value="Spermadhesin"/>
</dbReference>
<dbReference type="Pfam" id="PF00431">
    <property type="entry name" value="CUB"/>
    <property type="match status" value="1"/>
</dbReference>
<dbReference type="SMART" id="SM00042">
    <property type="entry name" value="CUB"/>
    <property type="match status" value="1"/>
</dbReference>
<dbReference type="SUPFAM" id="SSF49854">
    <property type="entry name" value="Spermadhesin, CUB domain"/>
    <property type="match status" value="1"/>
</dbReference>
<dbReference type="PROSITE" id="PS01180">
    <property type="entry name" value="CUB"/>
    <property type="match status" value="1"/>
</dbReference>
<dbReference type="PROSITE" id="PS00985">
    <property type="entry name" value="SPERMADHESIN_1"/>
    <property type="match status" value="1"/>
</dbReference>
<dbReference type="PROSITE" id="PS00986">
    <property type="entry name" value="SPERMADHESIN_2"/>
    <property type="match status" value="1"/>
</dbReference>
<accession>P35495</accession>
<protein>
    <recommendedName>
        <fullName>Major seminal plasma glycoprotein PSP-I</fullName>
    </recommendedName>
    <alternativeName>
        <fullName>SP3</fullName>
    </alternativeName>
</protein>
<sequence length="133" mass="14501">MKLGSAIPWALLFSTATLISTGWGLDYHACGGRLTDDYGTIFTYKGPKTECVWTLQVDPKYKLLVSIPTLNLTCGKEYVEILEGAPGSKSLGKFCEGLSILNRGSSGMTVKYKRDSGHPASPYEIIFLRDSQG</sequence>
<organism>
    <name type="scientific">Sus scrofa</name>
    <name type="common">Pig</name>
    <dbReference type="NCBI Taxonomy" id="9823"/>
    <lineage>
        <taxon>Eukaryota</taxon>
        <taxon>Metazoa</taxon>
        <taxon>Chordata</taxon>
        <taxon>Craniata</taxon>
        <taxon>Vertebrata</taxon>
        <taxon>Euteleostomi</taxon>
        <taxon>Mammalia</taxon>
        <taxon>Eutheria</taxon>
        <taxon>Laurasiatheria</taxon>
        <taxon>Artiodactyla</taxon>
        <taxon>Suina</taxon>
        <taxon>Suidae</taxon>
        <taxon>Sus</taxon>
    </lineage>
</organism>
<name>PSP1_PIG</name>
<comment type="function">
    <text>Not yet identified, major porcine seminal plasma protein. Can bind soybean trypsin inhibitor after deglycosylation.</text>
</comment>
<comment type="subunit">
    <text>Monomer or heterodimer with PSP-II (depending on the type of glycosylation of PSP-I).</text>
</comment>
<comment type="subcellular location">
    <subcellularLocation>
        <location>Secreted</location>
    </subcellularLocation>
</comment>
<comment type="tissue specificity">
    <text>Seminal plasma or sperm.</text>
</comment>
<comment type="mass spectrometry" mass="11982.0" error="4.0" method="MALDI" evidence="3"/>
<comment type="similarity">
    <text evidence="5">Belongs to the spermadhesin family.</text>
</comment>
<keyword id="KW-0002">3D-structure</keyword>
<keyword id="KW-0903">Direct protein sequencing</keyword>
<keyword id="KW-1015">Disulfide bond</keyword>
<keyword id="KW-0325">Glycoprotein</keyword>
<keyword id="KW-1185">Reference proteome</keyword>
<keyword id="KW-0964">Secreted</keyword>
<keyword id="KW-0732">Signal</keyword>
<proteinExistence type="evidence at protein level"/>
<feature type="signal peptide" evidence="2 4">
    <location>
        <begin position="1"/>
        <end position="24"/>
    </location>
</feature>
<feature type="chain" id="PRO_0000033188" description="Major seminal plasma glycoprotein PSP-I">
    <location>
        <begin position="25"/>
        <end position="133"/>
    </location>
</feature>
<feature type="domain" description="CUB" evidence="1">
    <location>
        <begin position="30"/>
        <end position="130"/>
    </location>
</feature>
<feature type="glycosylation site" id="CAR_000189" description="N-linked (GlcNAc...) (complex) asparagine" evidence="3">
    <location>
        <position position="71"/>
    </location>
</feature>
<feature type="disulfide bond" evidence="1 3">
    <location>
        <begin position="30"/>
        <end position="51"/>
    </location>
</feature>
<feature type="disulfide bond" evidence="1 3">
    <location>
        <begin position="74"/>
        <end position="95"/>
    </location>
</feature>
<feature type="sequence conflict" description="In Ref. 3; AA sequence." evidence="5" ref="3">
    <original>I</original>
    <variation>V</variation>
    <location>
        <position position="81"/>
    </location>
</feature>
<feature type="strand" evidence="6">
    <location>
        <begin position="32"/>
        <end position="35"/>
    </location>
</feature>
<feature type="strand" evidence="6">
    <location>
        <begin position="37"/>
        <end position="42"/>
    </location>
</feature>
<feature type="strand" evidence="6">
    <location>
        <begin position="49"/>
        <end position="56"/>
    </location>
</feature>
<feature type="strand" evidence="6">
    <location>
        <begin position="61"/>
        <end position="71"/>
    </location>
</feature>
<feature type="turn" evidence="6">
    <location>
        <begin position="74"/>
        <end position="76"/>
    </location>
</feature>
<feature type="strand" evidence="6">
    <location>
        <begin position="77"/>
        <end position="85"/>
    </location>
</feature>
<feature type="strand" evidence="6">
    <location>
        <begin position="90"/>
        <end position="104"/>
    </location>
</feature>
<feature type="strand" evidence="6">
    <location>
        <begin position="109"/>
        <end position="114"/>
    </location>
</feature>
<feature type="strand" evidence="6">
    <location>
        <begin position="124"/>
        <end position="130"/>
    </location>
</feature>